<evidence type="ECO:0000255" key="1">
    <source>
        <dbReference type="HAMAP-Rule" id="MF_03109"/>
    </source>
</evidence>
<evidence type="ECO:0000255" key="2">
    <source>
        <dbReference type="PROSITE-ProRule" id="PRU01052"/>
    </source>
</evidence>
<evidence type="ECO:0000269" key="3">
    <source>
    </source>
</evidence>
<evidence type="ECO:0000269" key="4">
    <source>
    </source>
</evidence>
<evidence type="ECO:0000269" key="5">
    <source>
    </source>
</evidence>
<evidence type="ECO:0000269" key="6">
    <source>
    </source>
</evidence>
<evidence type="ECO:0000269" key="7">
    <source>
    </source>
</evidence>
<name>SEY1_YEAST</name>
<protein>
    <recommendedName>
        <fullName evidence="1">Protein SEY1</fullName>
        <ecNumber evidence="1">3.6.5.-</ecNumber>
    </recommendedName>
    <alternativeName>
        <fullName evidence="1">Synthetic enhancer of YOP1 protein</fullName>
    </alternativeName>
</protein>
<keyword id="KW-0256">Endoplasmic reticulum</keyword>
<keyword id="KW-0342">GTP-binding</keyword>
<keyword id="KW-0378">Hydrolase</keyword>
<keyword id="KW-0472">Membrane</keyword>
<keyword id="KW-0547">Nucleotide-binding</keyword>
<keyword id="KW-1185">Reference proteome</keyword>
<keyword id="KW-0346">Stress response</keyword>
<keyword id="KW-0812">Transmembrane</keyword>
<keyword id="KW-1133">Transmembrane helix</keyword>
<reference key="1">
    <citation type="journal article" date="1996" name="Yeast">
        <title>Analysis of a 22,956 bp region on the right arm of Saccharomyces cerevisiae chromosome XV.</title>
        <authorList>
            <person name="Madania A."/>
            <person name="Poch O."/>
            <person name="Tarassov I.A."/>
            <person name="Winsor B."/>
            <person name="Martin R.P."/>
        </authorList>
    </citation>
    <scope>NUCLEOTIDE SEQUENCE [LARGE SCALE GENOMIC DNA]</scope>
    <source>
        <strain>S288c / FY1678</strain>
    </source>
</reference>
<reference key="2">
    <citation type="journal article" date="2014" name="G3 (Bethesda)">
        <title>The reference genome sequence of Saccharomyces cerevisiae: Then and now.</title>
        <authorList>
            <person name="Engel S.R."/>
            <person name="Dietrich F.S."/>
            <person name="Fisk D.G."/>
            <person name="Binkley G."/>
            <person name="Balakrishnan R."/>
            <person name="Costanzo M.C."/>
            <person name="Dwight S.S."/>
            <person name="Hitz B.C."/>
            <person name="Karra K."/>
            <person name="Nash R.S."/>
            <person name="Weng S."/>
            <person name="Wong E.D."/>
            <person name="Lloyd P."/>
            <person name="Skrzypek M.S."/>
            <person name="Miyasato S.R."/>
            <person name="Simison M."/>
            <person name="Cherry J.M."/>
        </authorList>
    </citation>
    <scope>GENOME REANNOTATION</scope>
    <source>
        <strain>ATCC 204508 / S288c</strain>
    </source>
</reference>
<reference key="3">
    <citation type="journal article" date="1997" name="Nature">
        <title>The nucleotide sequence of Saccharomyces cerevisiae chromosome XV.</title>
        <authorList>
            <person name="Dujon B."/>
            <person name="Albermann K."/>
            <person name="Aldea M."/>
            <person name="Alexandraki D."/>
            <person name="Ansorge W."/>
            <person name="Arino J."/>
            <person name="Benes V."/>
            <person name="Bohn C."/>
            <person name="Bolotin-Fukuhara M."/>
            <person name="Bordonne R."/>
            <person name="Boyer J."/>
            <person name="Camasses A."/>
            <person name="Casamayor A."/>
            <person name="Casas C."/>
            <person name="Cheret G."/>
            <person name="Cziepluch C."/>
            <person name="Daignan-Fornier B."/>
            <person name="Dang V.-D."/>
            <person name="de Haan M."/>
            <person name="Delius H."/>
            <person name="Durand P."/>
            <person name="Fairhead C."/>
            <person name="Feldmann H."/>
            <person name="Gaillon L."/>
            <person name="Galisson F."/>
            <person name="Gamo F.-J."/>
            <person name="Gancedo C."/>
            <person name="Goffeau A."/>
            <person name="Goulding S.E."/>
            <person name="Grivell L.A."/>
            <person name="Habbig B."/>
            <person name="Hand N.J."/>
            <person name="Hani J."/>
            <person name="Hattenhorst U."/>
            <person name="Hebling U."/>
            <person name="Hernando Y."/>
            <person name="Herrero E."/>
            <person name="Heumann K."/>
            <person name="Hiesel R."/>
            <person name="Hilger F."/>
            <person name="Hofmann B."/>
            <person name="Hollenberg C.P."/>
            <person name="Hughes B."/>
            <person name="Jauniaux J.-C."/>
            <person name="Kalogeropoulos A."/>
            <person name="Katsoulou C."/>
            <person name="Kordes E."/>
            <person name="Lafuente M.J."/>
            <person name="Landt O."/>
            <person name="Louis E.J."/>
            <person name="Maarse A.C."/>
            <person name="Madania A."/>
            <person name="Mannhaupt G."/>
            <person name="Marck C."/>
            <person name="Martin R.P."/>
            <person name="Mewes H.-W."/>
            <person name="Michaux G."/>
            <person name="Paces V."/>
            <person name="Parle-McDermott A.G."/>
            <person name="Pearson B.M."/>
            <person name="Perrin A."/>
            <person name="Pettersson B."/>
            <person name="Poch O."/>
            <person name="Pohl T.M."/>
            <person name="Poirey R."/>
            <person name="Portetelle D."/>
            <person name="Pujol A."/>
            <person name="Purnelle B."/>
            <person name="Ramezani Rad M."/>
            <person name="Rechmann S."/>
            <person name="Schwager C."/>
            <person name="Schweizer M."/>
            <person name="Sor F."/>
            <person name="Sterky F."/>
            <person name="Tarassov I.A."/>
            <person name="Teodoru C."/>
            <person name="Tettelin H."/>
            <person name="Thierry A."/>
            <person name="Tobiasch E."/>
            <person name="Tzermia M."/>
            <person name="Uhlen M."/>
            <person name="Unseld M."/>
            <person name="Valens M."/>
            <person name="Vandenbol M."/>
            <person name="Vetter I."/>
            <person name="Vlcek C."/>
            <person name="Voet M."/>
            <person name="Volckaert G."/>
            <person name="Voss H."/>
            <person name="Wambutt R."/>
            <person name="Wedler H."/>
            <person name="Wiemann S."/>
            <person name="Winsor B."/>
            <person name="Wolfe K.H."/>
            <person name="Zollner A."/>
            <person name="Zumstein E."/>
            <person name="Kleine K."/>
        </authorList>
    </citation>
    <scope>NUCLEOTIDE SEQUENCE [LARGE SCALE GENOMIC DNA]</scope>
    <source>
        <strain>ATCC 204508 / S288c</strain>
    </source>
</reference>
<reference key="4">
    <citation type="journal article" date="2001" name="Plant Mol. Biol.">
        <title>The stress- and abscisic acid-induced barley gene HVA22: developmental regulation and homologues in diverse organisms.</title>
        <authorList>
            <person name="Shen Q."/>
            <person name="Chen C.-N."/>
            <person name="Brands A."/>
            <person name="Pan S.-M."/>
            <person name="Ho T.-H.D."/>
        </authorList>
    </citation>
    <scope>INDUCTION</scope>
</reference>
<reference key="5">
    <citation type="journal article" date="2002" name="Plant Physiol.">
        <title>Function of a plant stress-induced gene, HVA22. Synthetic enhancement screen with its yeast homolog reveals its role in vesicular traffic.</title>
        <authorList>
            <person name="Brands A."/>
            <person name="Ho T.-H.D."/>
        </authorList>
    </citation>
    <scope>FUNCTION</scope>
</reference>
<reference key="6">
    <citation type="journal article" date="2003" name="Nature">
        <title>Global analysis of protein localization in budding yeast.</title>
        <authorList>
            <person name="Huh W.-K."/>
            <person name="Falvo J.V."/>
            <person name="Gerke L.C."/>
            <person name="Carroll A.S."/>
            <person name="Howson R.W."/>
            <person name="Weissman J.S."/>
            <person name="O'Shea E.K."/>
        </authorList>
    </citation>
    <scope>SUBCELLULAR LOCATION [LARGE SCALE ANALYSIS]</scope>
</reference>
<reference key="7">
    <citation type="journal article" date="2003" name="Nature">
        <title>Global analysis of protein expression in yeast.</title>
        <authorList>
            <person name="Ghaemmaghami S."/>
            <person name="Huh W.-K."/>
            <person name="Bower K."/>
            <person name="Howson R.W."/>
            <person name="Belle A."/>
            <person name="Dephoure N."/>
            <person name="O'Shea E.K."/>
            <person name="Weissman J.S."/>
        </authorList>
    </citation>
    <scope>LEVEL OF PROTEIN EXPRESSION [LARGE SCALE ANALYSIS]</scope>
</reference>
<reference key="8">
    <citation type="journal article" date="2006" name="Proc. Natl. Acad. Sci. U.S.A.">
        <title>A global topology map of the Saccharomyces cerevisiae membrane proteome.</title>
        <authorList>
            <person name="Kim H."/>
            <person name="Melen K."/>
            <person name="Oesterberg M."/>
            <person name="von Heijne G."/>
        </authorList>
    </citation>
    <scope>TOPOLOGY [LARGE SCALE ANALYSIS]</scope>
    <source>
        <strain>ATCC 208353 / W303-1A</strain>
    </source>
</reference>
<reference key="9">
    <citation type="journal article" date="2009" name="Cell">
        <title>A class of dynamin-like GTPases involved in the generation of the tubular ER network.</title>
        <authorList>
            <person name="Hu J."/>
            <person name="Shibata Y."/>
            <person name="Zhu P.-P."/>
            <person name="Voss C."/>
            <person name="Rismanchi N."/>
            <person name="Prinz W.A."/>
            <person name="Rapoport T.A."/>
            <person name="Blackstone C."/>
        </authorList>
    </citation>
    <scope>FUNCTION</scope>
    <scope>SUBCELLULAR LOCATION</scope>
    <scope>INTERACTION WITH RTN1 AND YOP1</scope>
    <scope>MUTAGENESIS OF LYS-50</scope>
</reference>
<comment type="function">
    <text evidence="1 4 7">Cooperates with the reticulon proteins RTN1 and RTN2 and the tubule-shaping DP1 family protein YOP1 to generate and maintain the structure of the tubular endoplasmic reticulum network. Has GTPase activity, which is required for its function in ER organization.</text>
</comment>
<comment type="subunit">
    <text evidence="1 7">Interacts with RTN1 and YOP1; GTP binding is not required for these interactions.</text>
</comment>
<comment type="interaction">
    <interactant intactId="EBI-37523">
        <id>Q99287</id>
    </interactant>
    <interactant intactId="EBI-38020">
        <id>Q04947</id>
        <label>RTN1</label>
    </interactant>
    <organismsDiffer>false</organismsDiffer>
    <experiments>3</experiments>
</comment>
<comment type="interaction">
    <interactant intactId="EBI-37523">
        <id>Q99287</id>
    </interactant>
    <interactant intactId="EBI-37092">
        <id>Q12402</id>
        <label>YOP1</label>
    </interactant>
    <organismsDiffer>false</organismsDiffer>
    <experiments>3</experiments>
</comment>
<comment type="subcellular location">
    <subcellularLocation>
        <location evidence="1 5 7">Endoplasmic reticulum membrane</location>
        <topology evidence="1 5 7">Multi-pass membrane protein</topology>
    </subcellularLocation>
    <text>Enriched in the cortical ER. Concentrated in punctae along the ER tubules.</text>
</comment>
<comment type="induction">
    <text evidence="3">By salt stress.</text>
</comment>
<comment type="miscellaneous">
    <text evidence="6">Present with 2265 molecules/cell in log phase SD medium.</text>
</comment>
<comment type="similarity">
    <text evidence="2">Belongs to the TRAFAC class dynamin-like GTPase superfamily. GB1/RHD3 GTPase family. RHD3 subfamily.</text>
</comment>
<dbReference type="EC" id="3.6.5.-" evidence="1"/>
<dbReference type="EMBL" id="U55021">
    <property type="protein sequence ID" value="AAB47412.1"/>
    <property type="molecule type" value="Genomic_DNA"/>
</dbReference>
<dbReference type="EMBL" id="Z75073">
    <property type="protein sequence ID" value="CAA99371.1"/>
    <property type="molecule type" value="Genomic_DNA"/>
</dbReference>
<dbReference type="EMBL" id="BK006948">
    <property type="protein sequence ID" value="DAA10939.1"/>
    <property type="molecule type" value="Genomic_DNA"/>
</dbReference>
<dbReference type="PIR" id="S67053">
    <property type="entry name" value="S67053"/>
</dbReference>
<dbReference type="RefSeq" id="NP_014808.1">
    <property type="nucleotide sequence ID" value="NM_001183584.1"/>
</dbReference>
<dbReference type="SMR" id="Q99287"/>
<dbReference type="BioGRID" id="34561">
    <property type="interactions" value="133"/>
</dbReference>
<dbReference type="DIP" id="DIP-49373N"/>
<dbReference type="FunCoup" id="Q99287">
    <property type="interactions" value="87"/>
</dbReference>
<dbReference type="IntAct" id="Q99287">
    <property type="interactions" value="16"/>
</dbReference>
<dbReference type="MINT" id="Q99287"/>
<dbReference type="STRING" id="4932.YOR165W"/>
<dbReference type="TCDB" id="1.N.5.1.6">
    <property type="family name" value="the endoplasmic reticulum fusion gtpase, atlastin (atlastin) family"/>
</dbReference>
<dbReference type="GlyGen" id="Q99287">
    <property type="glycosylation" value="2 sites, 1 O-linked glycan (2 sites)"/>
</dbReference>
<dbReference type="iPTMnet" id="Q99287"/>
<dbReference type="PaxDb" id="4932-YOR165W"/>
<dbReference type="PeptideAtlas" id="Q99287"/>
<dbReference type="EnsemblFungi" id="YOR165W_mRNA">
    <property type="protein sequence ID" value="YOR165W"/>
    <property type="gene ID" value="YOR165W"/>
</dbReference>
<dbReference type="GeneID" id="854336"/>
<dbReference type="KEGG" id="sce:YOR165W"/>
<dbReference type="AGR" id="SGD:S000005691"/>
<dbReference type="SGD" id="S000005691">
    <property type="gene designation" value="SEY1"/>
</dbReference>
<dbReference type="VEuPathDB" id="FungiDB:YOR165W"/>
<dbReference type="eggNOG" id="KOG2203">
    <property type="taxonomic scope" value="Eukaryota"/>
</dbReference>
<dbReference type="HOGENOM" id="CLU_011270_0_0_1"/>
<dbReference type="InParanoid" id="Q99287"/>
<dbReference type="OMA" id="PIIKMTE"/>
<dbReference type="OrthoDB" id="1597724at2759"/>
<dbReference type="BioCyc" id="YEAST:G3O-33681-MONOMER"/>
<dbReference type="BioGRID-ORCS" id="854336">
    <property type="hits" value="0 hits in 10 CRISPR screens"/>
</dbReference>
<dbReference type="PRO" id="PR:Q99287"/>
<dbReference type="Proteomes" id="UP000002311">
    <property type="component" value="Chromosome XV"/>
</dbReference>
<dbReference type="RNAct" id="Q99287">
    <property type="molecule type" value="protein"/>
</dbReference>
<dbReference type="GO" id="GO:0071944">
    <property type="term" value="C:cell periphery"/>
    <property type="evidence" value="ECO:0007005"/>
    <property type="project" value="SGD"/>
</dbReference>
<dbReference type="GO" id="GO:0005933">
    <property type="term" value="C:cellular bud"/>
    <property type="evidence" value="ECO:0007005"/>
    <property type="project" value="SGD"/>
</dbReference>
<dbReference type="GO" id="GO:0032541">
    <property type="term" value="C:cortical endoplasmic reticulum"/>
    <property type="evidence" value="ECO:0000314"/>
    <property type="project" value="SGD"/>
</dbReference>
<dbReference type="GO" id="GO:0005737">
    <property type="term" value="C:cytoplasm"/>
    <property type="evidence" value="ECO:0007005"/>
    <property type="project" value="SGD"/>
</dbReference>
<dbReference type="GO" id="GO:0005783">
    <property type="term" value="C:endoplasmic reticulum"/>
    <property type="evidence" value="ECO:0000314"/>
    <property type="project" value="SGD"/>
</dbReference>
<dbReference type="GO" id="GO:0005789">
    <property type="term" value="C:endoplasmic reticulum membrane"/>
    <property type="evidence" value="ECO:0000303"/>
    <property type="project" value="UniProtKB"/>
</dbReference>
<dbReference type="GO" id="GO:0005525">
    <property type="term" value="F:GTP binding"/>
    <property type="evidence" value="ECO:0007669"/>
    <property type="project" value="UniProtKB-UniRule"/>
</dbReference>
<dbReference type="GO" id="GO:0003924">
    <property type="term" value="F:GTPase activity"/>
    <property type="evidence" value="ECO:0000315"/>
    <property type="project" value="SGD"/>
</dbReference>
<dbReference type="GO" id="GO:0048309">
    <property type="term" value="P:endoplasmic reticulum inheritance"/>
    <property type="evidence" value="ECO:0000316"/>
    <property type="project" value="UniProtKB"/>
</dbReference>
<dbReference type="GO" id="GO:0016320">
    <property type="term" value="P:endoplasmic reticulum membrane fusion"/>
    <property type="evidence" value="ECO:0000314"/>
    <property type="project" value="SGD"/>
</dbReference>
<dbReference type="GO" id="GO:0007029">
    <property type="term" value="P:endoplasmic reticulum organization"/>
    <property type="evidence" value="ECO:0000316"/>
    <property type="project" value="UniProtKB"/>
</dbReference>
<dbReference type="GO" id="GO:0061024">
    <property type="term" value="P:membrane organization"/>
    <property type="evidence" value="ECO:0000316"/>
    <property type="project" value="SGD"/>
</dbReference>
<dbReference type="CDD" id="cd01851">
    <property type="entry name" value="GBP"/>
    <property type="match status" value="1"/>
</dbReference>
<dbReference type="FunFam" id="3.40.50.300:FF:000727">
    <property type="entry name" value="Protein SEY1 homolog"/>
    <property type="match status" value="1"/>
</dbReference>
<dbReference type="Gene3D" id="3.40.50.300">
    <property type="entry name" value="P-loop containing nucleotide triphosphate hydrolases"/>
    <property type="match status" value="1"/>
</dbReference>
<dbReference type="HAMAP" id="MF_03109">
    <property type="entry name" value="Sey1"/>
    <property type="match status" value="1"/>
</dbReference>
<dbReference type="InterPro" id="IPR030386">
    <property type="entry name" value="G_GB1_RHD3_dom"/>
</dbReference>
<dbReference type="InterPro" id="IPR027417">
    <property type="entry name" value="P-loop_NTPase"/>
</dbReference>
<dbReference type="InterPro" id="IPR008803">
    <property type="entry name" value="RHD3/Sey1"/>
</dbReference>
<dbReference type="InterPro" id="IPR046758">
    <property type="entry name" value="Sey1/RHD3-like_3HB"/>
</dbReference>
<dbReference type="PANTHER" id="PTHR45923">
    <property type="entry name" value="PROTEIN SEY1"/>
    <property type="match status" value="1"/>
</dbReference>
<dbReference type="PANTHER" id="PTHR45923:SF2">
    <property type="entry name" value="PROTEIN SEY1"/>
    <property type="match status" value="1"/>
</dbReference>
<dbReference type="Pfam" id="PF05879">
    <property type="entry name" value="RHD3_GTPase"/>
    <property type="match status" value="1"/>
</dbReference>
<dbReference type="Pfam" id="PF20428">
    <property type="entry name" value="Sey1_3HB"/>
    <property type="match status" value="1"/>
</dbReference>
<dbReference type="SUPFAM" id="SSF52540">
    <property type="entry name" value="P-loop containing nucleoside triphosphate hydrolases"/>
    <property type="match status" value="1"/>
</dbReference>
<dbReference type="PROSITE" id="PS51715">
    <property type="entry name" value="G_GB1_RHD3"/>
    <property type="match status" value="1"/>
</dbReference>
<sequence length="776" mass="89432">MADRPAIQLIDEEKEFHQSALQYFQQCIGNRDVGLDYHVISVFGSQSSGKSTLLNVLFNTNFDTMDAQVKRQQTTKGIWLAHTKQVNTTIEIDNDRPDIFVLDVEGSDGSERGEDQDFERKAALFAIAVSEVLIVNMWEQQIGLYQGNNMALLKTVFEVNLSLFGKNDNDHKVLLLFVIRDHVGVTPLSSLSDSVTRELEKIWTELSKPAGCEGSSLYDYFDLKFVGLAHKLLQEDKFTQDVKKLGDSFVMKGTENYYFKPQYHHRLPLDGWTMYAENCWDQIERNKDLDLPTQQILVARFKTEEISNEALEEFISKYDESIAPLKGNLGSLTSQLVKLKEECLTKYDEQASRYARNVYMEKREALNTKLNSHISGTINEFLESLMEKLWDDLKLEVSSRDKATTSFVESVAAGKSKIEKEFNESMETFKKLGLLISNEEITCKFSDDIEERIKQLRDAELKAKIGRIKKNLVPELKDHVIHLLSHPSKKVWDDIMNDFESTIKDNISAYQVEKDKYDFKIGLSESENAKIYKNIRILAWRTLDTTVHDYLKIDTIVSILRDRFEDVFRYDAEGSPRLWKTEEEIDGAFRVAKEHALEVFEVLSLAVTSDNVEIIPDVPMAEEESGEDNEIYRDNEGVFHSRRFAHILTELQKENVLDQFRRQINITVLDSKRSIITTRTHIPPWIYVLLAVLGWNEFVAVIRNPLFVTLTLILGATFFVIHKFGLWGPVVNVVQSAVGETRTAIKDKLRQFVVEDHEVKESFEMKDFSKNEQKEK</sequence>
<gene>
    <name evidence="1" type="primary">SEY1</name>
    <name type="ordered locus">YOR165W</name>
    <name type="ORF">O3590</name>
</gene>
<accession>Q99287</accession>
<accession>D6W2M3</accession>
<feature type="chain" id="PRO_0000155140" description="Protein SEY1">
    <location>
        <begin position="1"/>
        <end position="776"/>
    </location>
</feature>
<feature type="topological domain" description="Cytoplasmic" evidence="1">
    <location>
        <begin position="1"/>
        <end position="681"/>
    </location>
</feature>
<feature type="transmembrane region" description="Helical" evidence="1">
    <location>
        <begin position="682"/>
        <end position="702"/>
    </location>
</feature>
<feature type="topological domain" description="Lumenal" evidence="1">
    <location>
        <begin position="703"/>
        <end position="705"/>
    </location>
</feature>
<feature type="transmembrane region" description="Helical" evidence="1">
    <location>
        <begin position="706"/>
        <end position="726"/>
    </location>
</feature>
<feature type="topological domain" description="Cytoplasmic" evidence="1">
    <location>
        <begin position="727"/>
        <end position="776"/>
    </location>
</feature>
<feature type="domain" description="GB1/RHD3-type G" evidence="2">
    <location>
        <begin position="34"/>
        <end position="263"/>
    </location>
</feature>
<feature type="binding site" evidence="1">
    <location>
        <begin position="44"/>
        <end position="51"/>
    </location>
    <ligand>
        <name>GTP</name>
        <dbReference type="ChEBI" id="CHEBI:37565"/>
    </ligand>
</feature>
<feature type="mutagenesis site" description="Abolishes GTP binding." evidence="7">
    <original>K</original>
    <variation>A</variation>
    <location>
        <position position="50"/>
    </location>
</feature>
<organism>
    <name type="scientific">Saccharomyces cerevisiae (strain ATCC 204508 / S288c)</name>
    <name type="common">Baker's yeast</name>
    <dbReference type="NCBI Taxonomy" id="559292"/>
    <lineage>
        <taxon>Eukaryota</taxon>
        <taxon>Fungi</taxon>
        <taxon>Dikarya</taxon>
        <taxon>Ascomycota</taxon>
        <taxon>Saccharomycotina</taxon>
        <taxon>Saccharomycetes</taxon>
        <taxon>Saccharomycetales</taxon>
        <taxon>Saccharomycetaceae</taxon>
        <taxon>Saccharomyces</taxon>
    </lineage>
</organism>
<proteinExistence type="evidence at protein level"/>